<keyword id="KW-0007">Acetylation</keyword>
<keyword id="KW-0113">Calvin cycle</keyword>
<keyword id="KW-0120">Carbon dioxide fixation</keyword>
<keyword id="KW-0150">Chloroplast</keyword>
<keyword id="KW-1015">Disulfide bond</keyword>
<keyword id="KW-0456">Lyase</keyword>
<keyword id="KW-0460">Magnesium</keyword>
<keyword id="KW-0479">Metal-binding</keyword>
<keyword id="KW-0488">Methylation</keyword>
<keyword id="KW-0503">Monooxygenase</keyword>
<keyword id="KW-0560">Oxidoreductase</keyword>
<keyword id="KW-0601">Photorespiration</keyword>
<keyword id="KW-0602">Photosynthesis</keyword>
<keyword id="KW-0934">Plastid</keyword>
<reference key="1">
    <citation type="journal article" date="2008" name="Theor. Appl. Genet.">
        <title>The complete nucleotide sequence of the cassava (Manihot esculenta) chloroplast genome and the evolution of atpF in Malpighiales: RNA editing and multiple losses of a group II intron.</title>
        <authorList>
            <person name="Daniell H."/>
            <person name="Wurdack K.J."/>
            <person name="Kanagaraj A."/>
            <person name="Lee S.-B."/>
            <person name="Saski C."/>
            <person name="Jansen R.K."/>
        </authorList>
    </citation>
    <scope>NUCLEOTIDE SEQUENCE [LARGE SCALE GENOMIC DNA]</scope>
    <source>
        <strain>cv. TME3</strain>
    </source>
</reference>
<name>RBL_MANES</name>
<gene>
    <name evidence="1" type="primary">rbcL</name>
</gene>
<accession>B1NWF8</accession>
<organism>
    <name type="scientific">Manihot esculenta</name>
    <name type="common">Cassava</name>
    <name type="synonym">Jatropha manihot</name>
    <dbReference type="NCBI Taxonomy" id="3983"/>
    <lineage>
        <taxon>Eukaryota</taxon>
        <taxon>Viridiplantae</taxon>
        <taxon>Streptophyta</taxon>
        <taxon>Embryophyta</taxon>
        <taxon>Tracheophyta</taxon>
        <taxon>Spermatophyta</taxon>
        <taxon>Magnoliopsida</taxon>
        <taxon>eudicotyledons</taxon>
        <taxon>Gunneridae</taxon>
        <taxon>Pentapetalae</taxon>
        <taxon>rosids</taxon>
        <taxon>fabids</taxon>
        <taxon>Malpighiales</taxon>
        <taxon>Euphorbiaceae</taxon>
        <taxon>Crotonoideae</taxon>
        <taxon>Manihoteae</taxon>
        <taxon>Manihot</taxon>
    </lineage>
</organism>
<evidence type="ECO:0000255" key="1">
    <source>
        <dbReference type="HAMAP-Rule" id="MF_01338"/>
    </source>
</evidence>
<proteinExistence type="inferred from homology"/>
<geneLocation type="chloroplast"/>
<sequence>MSPQTETKASVGFKAGVKDYKLTYYTPDYQTKDTDILAAFRVTPQPGVPPEEAGAAVAAESSTGTWTTVWTDGLTSLDRYKGRCYGLEPVPGEENQYIAYVAYPLDLFEEGSVTNMFTSIVGNVFGFKALRALRLEDLRVPPAYSKTFQGPPHGIQVERDKLNKYGRPLLGCTIKPKLGLSAKNYGRAVYECLRGGLDFTKDDENVNSQPFMRWRDRFLFCAEAIYKAQAETGEIKGHYLNATAGTCEEMIKRAVCARELGVPIVMHDYLTGGFTANTSLAHYCRDNGLLLHIHRAMHAVIDRQKNHGMHFRVLAKALRLSGGDHIHAGTVVGKLEGERDITLGFVDLLRDDFIEKDRSRGIYFTQDWVSLPGVLPVASGGIHVWHMPALTEIFGDDSVLQFGGGTLGHPWGNAPGAVANRVALEACVQARNEGRDLAREGNDIIREASKWSPELAAACEVWKEIKFEFAAVDTLDK</sequence>
<comment type="function">
    <text evidence="1">RuBisCO catalyzes two reactions: the carboxylation of D-ribulose 1,5-bisphosphate, the primary event in carbon dioxide fixation, as well as the oxidative fragmentation of the pentose substrate in the photorespiration process. Both reactions occur simultaneously and in competition at the same active site.</text>
</comment>
<comment type="catalytic activity">
    <reaction evidence="1">
        <text>2 (2R)-3-phosphoglycerate + 2 H(+) = D-ribulose 1,5-bisphosphate + CO2 + H2O</text>
        <dbReference type="Rhea" id="RHEA:23124"/>
        <dbReference type="ChEBI" id="CHEBI:15377"/>
        <dbReference type="ChEBI" id="CHEBI:15378"/>
        <dbReference type="ChEBI" id="CHEBI:16526"/>
        <dbReference type="ChEBI" id="CHEBI:57870"/>
        <dbReference type="ChEBI" id="CHEBI:58272"/>
        <dbReference type="EC" id="4.1.1.39"/>
    </reaction>
</comment>
<comment type="catalytic activity">
    <reaction evidence="1">
        <text>D-ribulose 1,5-bisphosphate + O2 = 2-phosphoglycolate + (2R)-3-phosphoglycerate + 2 H(+)</text>
        <dbReference type="Rhea" id="RHEA:36631"/>
        <dbReference type="ChEBI" id="CHEBI:15378"/>
        <dbReference type="ChEBI" id="CHEBI:15379"/>
        <dbReference type="ChEBI" id="CHEBI:57870"/>
        <dbReference type="ChEBI" id="CHEBI:58033"/>
        <dbReference type="ChEBI" id="CHEBI:58272"/>
    </reaction>
</comment>
<comment type="cofactor">
    <cofactor evidence="1">
        <name>Mg(2+)</name>
        <dbReference type="ChEBI" id="CHEBI:18420"/>
    </cofactor>
    <text evidence="1">Binds 1 Mg(2+) ion per subunit.</text>
</comment>
<comment type="subunit">
    <text evidence="1">Heterohexadecamer of 8 large chains and 8 small chains; disulfide-linked. The disulfide link is formed within the large subunit homodimers.</text>
</comment>
<comment type="subcellular location">
    <subcellularLocation>
        <location>Plastid</location>
        <location>Chloroplast</location>
    </subcellularLocation>
</comment>
<comment type="PTM">
    <text evidence="1">The disulfide bond which can form in the large chain dimeric partners within the hexadecamer appears to be associated with oxidative stress and protein turnover.</text>
</comment>
<comment type="miscellaneous">
    <text evidence="1">The basic functional RuBisCO is composed of a large chain homodimer in a 'head-to-tail' conformation. In form I RuBisCO this homodimer is arranged in a barrel-like tetramer with the small subunits forming a tetrameric 'cap' on each end of the 'barrel'.</text>
</comment>
<comment type="similarity">
    <text evidence="1">Belongs to the RuBisCO large chain family. Type I subfamily.</text>
</comment>
<protein>
    <recommendedName>
        <fullName evidence="1">Ribulose bisphosphate carboxylase large chain</fullName>
        <shortName evidence="1">RuBisCO large subunit</shortName>
        <ecNumber evidence="1">4.1.1.39</ecNumber>
    </recommendedName>
</protein>
<feature type="propeptide" id="PRO_0000355788" evidence="1">
    <location>
        <begin position="1"/>
        <end position="2"/>
    </location>
</feature>
<feature type="chain" id="PRO_0000355789" description="Ribulose bisphosphate carboxylase large chain">
    <location>
        <begin position="3"/>
        <end position="477"/>
    </location>
</feature>
<feature type="active site" description="Proton acceptor" evidence="1">
    <location>
        <position position="175"/>
    </location>
</feature>
<feature type="active site" description="Proton acceptor" evidence="1">
    <location>
        <position position="294"/>
    </location>
</feature>
<feature type="binding site" description="in homodimeric partner" evidence="1">
    <location>
        <position position="123"/>
    </location>
    <ligand>
        <name>substrate</name>
    </ligand>
</feature>
<feature type="binding site" evidence="1">
    <location>
        <position position="173"/>
    </location>
    <ligand>
        <name>substrate</name>
    </ligand>
</feature>
<feature type="binding site" evidence="1">
    <location>
        <position position="177"/>
    </location>
    <ligand>
        <name>substrate</name>
    </ligand>
</feature>
<feature type="binding site" description="via carbamate group" evidence="1">
    <location>
        <position position="201"/>
    </location>
    <ligand>
        <name>Mg(2+)</name>
        <dbReference type="ChEBI" id="CHEBI:18420"/>
    </ligand>
</feature>
<feature type="binding site" evidence="1">
    <location>
        <position position="203"/>
    </location>
    <ligand>
        <name>Mg(2+)</name>
        <dbReference type="ChEBI" id="CHEBI:18420"/>
    </ligand>
</feature>
<feature type="binding site" evidence="1">
    <location>
        <position position="204"/>
    </location>
    <ligand>
        <name>Mg(2+)</name>
        <dbReference type="ChEBI" id="CHEBI:18420"/>
    </ligand>
</feature>
<feature type="binding site" evidence="1">
    <location>
        <position position="295"/>
    </location>
    <ligand>
        <name>substrate</name>
    </ligand>
</feature>
<feature type="binding site" evidence="1">
    <location>
        <position position="327"/>
    </location>
    <ligand>
        <name>substrate</name>
    </ligand>
</feature>
<feature type="binding site" evidence="1">
    <location>
        <position position="379"/>
    </location>
    <ligand>
        <name>substrate</name>
    </ligand>
</feature>
<feature type="site" description="Transition state stabilizer" evidence="1">
    <location>
        <position position="334"/>
    </location>
</feature>
<feature type="modified residue" description="N-acetylproline" evidence="1">
    <location>
        <position position="3"/>
    </location>
</feature>
<feature type="modified residue" description="N6,N6,N6-trimethyllysine" evidence="1">
    <location>
        <position position="14"/>
    </location>
</feature>
<feature type="modified residue" description="N6-carboxylysine" evidence="1">
    <location>
        <position position="201"/>
    </location>
</feature>
<feature type="disulfide bond" description="Interchain; in linked form" evidence="1">
    <location>
        <position position="247"/>
    </location>
</feature>
<dbReference type="EC" id="4.1.1.39" evidence="1"/>
<dbReference type="EMBL" id="EU117376">
    <property type="protein sequence ID" value="ABV66162.1"/>
    <property type="molecule type" value="Genomic_DNA"/>
</dbReference>
<dbReference type="RefSeq" id="YP_001718445.1">
    <property type="nucleotide sequence ID" value="NC_010433.1"/>
</dbReference>
<dbReference type="SMR" id="B1NWF8"/>
<dbReference type="GeneID" id="5999955"/>
<dbReference type="KEGG" id="mesc:5999955"/>
<dbReference type="OrthoDB" id="563909at2759"/>
<dbReference type="GO" id="GO:0009507">
    <property type="term" value="C:chloroplast"/>
    <property type="evidence" value="ECO:0007669"/>
    <property type="project" value="UniProtKB-SubCell"/>
</dbReference>
<dbReference type="GO" id="GO:0000287">
    <property type="term" value="F:magnesium ion binding"/>
    <property type="evidence" value="ECO:0007669"/>
    <property type="project" value="UniProtKB-UniRule"/>
</dbReference>
<dbReference type="GO" id="GO:0004497">
    <property type="term" value="F:monooxygenase activity"/>
    <property type="evidence" value="ECO:0007669"/>
    <property type="project" value="UniProtKB-KW"/>
</dbReference>
<dbReference type="GO" id="GO:0016984">
    <property type="term" value="F:ribulose-bisphosphate carboxylase activity"/>
    <property type="evidence" value="ECO:0007669"/>
    <property type="project" value="UniProtKB-UniRule"/>
</dbReference>
<dbReference type="GO" id="GO:0009853">
    <property type="term" value="P:photorespiration"/>
    <property type="evidence" value="ECO:0007669"/>
    <property type="project" value="UniProtKB-KW"/>
</dbReference>
<dbReference type="GO" id="GO:0019253">
    <property type="term" value="P:reductive pentose-phosphate cycle"/>
    <property type="evidence" value="ECO:0007669"/>
    <property type="project" value="UniProtKB-UniRule"/>
</dbReference>
<dbReference type="CDD" id="cd08212">
    <property type="entry name" value="RuBisCO_large_I"/>
    <property type="match status" value="1"/>
</dbReference>
<dbReference type="FunFam" id="3.20.20.110:FF:000001">
    <property type="entry name" value="Ribulose bisphosphate carboxylase large chain"/>
    <property type="match status" value="1"/>
</dbReference>
<dbReference type="FunFam" id="3.30.70.150:FF:000001">
    <property type="entry name" value="Ribulose bisphosphate carboxylase large chain"/>
    <property type="match status" value="1"/>
</dbReference>
<dbReference type="Gene3D" id="3.20.20.110">
    <property type="entry name" value="Ribulose bisphosphate carboxylase, large subunit, C-terminal domain"/>
    <property type="match status" value="1"/>
</dbReference>
<dbReference type="Gene3D" id="3.30.70.150">
    <property type="entry name" value="RuBisCO large subunit, N-terminal domain"/>
    <property type="match status" value="1"/>
</dbReference>
<dbReference type="HAMAP" id="MF_01338">
    <property type="entry name" value="RuBisCO_L_type1"/>
    <property type="match status" value="1"/>
</dbReference>
<dbReference type="InterPro" id="IPR033966">
    <property type="entry name" value="RuBisCO"/>
</dbReference>
<dbReference type="InterPro" id="IPR020878">
    <property type="entry name" value="RuBisCo_large_chain_AS"/>
</dbReference>
<dbReference type="InterPro" id="IPR000685">
    <property type="entry name" value="RuBisCO_lsu_C"/>
</dbReference>
<dbReference type="InterPro" id="IPR036376">
    <property type="entry name" value="RuBisCO_lsu_C_sf"/>
</dbReference>
<dbReference type="InterPro" id="IPR017443">
    <property type="entry name" value="RuBisCO_lsu_fd_N"/>
</dbReference>
<dbReference type="InterPro" id="IPR036422">
    <property type="entry name" value="RuBisCO_lsu_N_sf"/>
</dbReference>
<dbReference type="InterPro" id="IPR020888">
    <property type="entry name" value="RuBisCO_lsuI"/>
</dbReference>
<dbReference type="NCBIfam" id="NF003252">
    <property type="entry name" value="PRK04208.1"/>
    <property type="match status" value="1"/>
</dbReference>
<dbReference type="PANTHER" id="PTHR42704">
    <property type="entry name" value="RIBULOSE BISPHOSPHATE CARBOXYLASE"/>
    <property type="match status" value="1"/>
</dbReference>
<dbReference type="PANTHER" id="PTHR42704:SF15">
    <property type="entry name" value="RIBULOSE BISPHOSPHATE CARBOXYLASE LARGE CHAIN"/>
    <property type="match status" value="1"/>
</dbReference>
<dbReference type="Pfam" id="PF00016">
    <property type="entry name" value="RuBisCO_large"/>
    <property type="match status" value="1"/>
</dbReference>
<dbReference type="Pfam" id="PF02788">
    <property type="entry name" value="RuBisCO_large_N"/>
    <property type="match status" value="1"/>
</dbReference>
<dbReference type="SFLD" id="SFLDG01052">
    <property type="entry name" value="RuBisCO"/>
    <property type="match status" value="1"/>
</dbReference>
<dbReference type="SFLD" id="SFLDS00014">
    <property type="entry name" value="RuBisCO"/>
    <property type="match status" value="1"/>
</dbReference>
<dbReference type="SFLD" id="SFLDG00301">
    <property type="entry name" value="RuBisCO-like_proteins"/>
    <property type="match status" value="1"/>
</dbReference>
<dbReference type="SUPFAM" id="SSF51649">
    <property type="entry name" value="RuBisCo, C-terminal domain"/>
    <property type="match status" value="1"/>
</dbReference>
<dbReference type="SUPFAM" id="SSF54966">
    <property type="entry name" value="RuBisCO, large subunit, small (N-terminal) domain"/>
    <property type="match status" value="1"/>
</dbReference>
<dbReference type="PROSITE" id="PS00157">
    <property type="entry name" value="RUBISCO_LARGE"/>
    <property type="match status" value="1"/>
</dbReference>